<comment type="function">
    <text evidence="3">Involved in heavy metal homeostasis. Probably exports nickel and cobalt ions out of the cell.</text>
</comment>
<comment type="catalytic activity">
    <reaction>
        <text>Ni(2+)(out) + ATP + H2O = Ni(2+)(in) + ADP + phosphate + H(+)</text>
        <dbReference type="Rhea" id="RHEA:15557"/>
        <dbReference type="ChEBI" id="CHEBI:15377"/>
        <dbReference type="ChEBI" id="CHEBI:15378"/>
        <dbReference type="ChEBI" id="CHEBI:30616"/>
        <dbReference type="ChEBI" id="CHEBI:43474"/>
        <dbReference type="ChEBI" id="CHEBI:49786"/>
        <dbReference type="ChEBI" id="CHEBI:456216"/>
    </reaction>
</comment>
<comment type="catalytic activity">
    <reaction>
        <text>Co(2+)(out) + ATP + H2O = Co(2+)(in) + ADP + phosphate + H(+)</text>
        <dbReference type="Rhea" id="RHEA:32779"/>
        <dbReference type="ChEBI" id="CHEBI:15377"/>
        <dbReference type="ChEBI" id="CHEBI:15378"/>
        <dbReference type="ChEBI" id="CHEBI:30616"/>
        <dbReference type="ChEBI" id="CHEBI:43474"/>
        <dbReference type="ChEBI" id="CHEBI:48828"/>
        <dbReference type="ChEBI" id="CHEBI:456216"/>
    </reaction>
</comment>
<comment type="subcellular location">
    <subcellularLocation>
        <location>Cell membrane</location>
        <topology>Multi-pass membrane protein</topology>
    </subcellularLocation>
</comment>
<comment type="induction">
    <text evidence="3">By both Co(2+) and superoxide stress.</text>
</comment>
<comment type="disruption phenotype">
    <text evidence="3">Cells lacking this gene are hypersensitive to Co(2+) and Ni(2+) and accumulate these metals in the cytoplasm.</text>
</comment>
<comment type="similarity">
    <text evidence="4">Belongs to the cation transport ATPase (P-type) (TC 3.A.3) family. Type IB subfamily.</text>
</comment>
<name>CTPD_MYCS2</name>
<evidence type="ECO:0000250" key="1"/>
<evidence type="ECO:0000255" key="2"/>
<evidence type="ECO:0000269" key="3">
    <source>
    </source>
</evidence>
<evidence type="ECO:0000305" key="4"/>
<proteinExistence type="evidence at protein level"/>
<reference key="1">
    <citation type="submission" date="2006-10" db="EMBL/GenBank/DDBJ databases">
        <authorList>
            <person name="Fleischmann R.D."/>
            <person name="Dodson R.J."/>
            <person name="Haft D.H."/>
            <person name="Merkel J.S."/>
            <person name="Nelson W.C."/>
            <person name="Fraser C.M."/>
        </authorList>
    </citation>
    <scope>NUCLEOTIDE SEQUENCE [LARGE SCALE GENOMIC DNA]</scope>
    <source>
        <strain>ATCC 700084 / mc(2)155</strain>
    </source>
</reference>
<reference key="2">
    <citation type="journal article" date="2007" name="Genome Biol.">
        <title>Interrupted coding sequences in Mycobacterium smegmatis: authentic mutations or sequencing errors?</title>
        <authorList>
            <person name="Deshayes C."/>
            <person name="Perrodou E."/>
            <person name="Gallien S."/>
            <person name="Euphrasie D."/>
            <person name="Schaeffer C."/>
            <person name="Van-Dorsselaer A."/>
            <person name="Poch O."/>
            <person name="Lecompte O."/>
            <person name="Reyrat J.-M."/>
        </authorList>
    </citation>
    <scope>NUCLEOTIDE SEQUENCE [LARGE SCALE GENOMIC DNA]</scope>
    <source>
        <strain>ATCC 700084 / mc(2)155</strain>
    </source>
</reference>
<reference key="3">
    <citation type="journal article" date="2009" name="Genome Res.">
        <title>Ortho-proteogenomics: multiple proteomes investigation through orthology and a new MS-based protocol.</title>
        <authorList>
            <person name="Gallien S."/>
            <person name="Perrodou E."/>
            <person name="Carapito C."/>
            <person name="Deshayes C."/>
            <person name="Reyrat J.-M."/>
            <person name="Van Dorsselaer A."/>
            <person name="Poch O."/>
            <person name="Schaeffer C."/>
            <person name="Lecompte O."/>
        </authorList>
    </citation>
    <scope>NUCLEOTIDE SEQUENCE [LARGE SCALE GENOMIC DNA]</scope>
    <source>
        <strain>ATCC 700084 / mc(2)155</strain>
    </source>
</reference>
<reference key="4">
    <citation type="journal article" date="2012" name="Mol. Microbiol.">
        <title>Role in metal homeostasis of CtpD, a Co(2)(+) transporting P(1B4)-ATPase of Mycobacterium smegmatis.</title>
        <authorList>
            <person name="Raimunda D."/>
            <person name="Long J.E."/>
            <person name="Sassetti C.M."/>
            <person name="Arguello J.M."/>
        </authorList>
    </citation>
    <scope>FUNCTION IN COBALT AND NICKEL HOMEOSTASIS</scope>
    <scope>INDUCTION</scope>
    <scope>DISRUPTION PHENOTYPE</scope>
</reference>
<organism>
    <name type="scientific">Mycolicibacterium smegmatis (strain ATCC 700084 / mc(2)155)</name>
    <name type="common">Mycobacterium smegmatis</name>
    <dbReference type="NCBI Taxonomy" id="246196"/>
    <lineage>
        <taxon>Bacteria</taxon>
        <taxon>Bacillati</taxon>
        <taxon>Actinomycetota</taxon>
        <taxon>Actinomycetes</taxon>
        <taxon>Mycobacteriales</taxon>
        <taxon>Mycobacteriaceae</taxon>
        <taxon>Mycolicibacterium</taxon>
    </lineage>
</organism>
<gene>
    <name type="primary">ctpD</name>
    <name type="synonym">cadA</name>
    <name type="ordered locus">MSMEG_5403</name>
    <name type="ordered locus">MSMEI_5256</name>
</gene>
<sequence>MTALYPAVEPAPAARPARPRSGGWLWTVPSVRWAAAALALFLTGLAAQLLGAPQAVVWTLYLACYVVGGWEPAWVGVRALRNRTLDVDLLMIVAAIGAATIGQVFDGALLIVIFATSGALEDVATTRTERSVRGLLDLAPEHATLLGDGSQRVVAAADLRPGDVIVVRPGERISADGTVIGGASEVDQSSITGEPLPAAKDVGDDVFAGTVNGSGALRVEVTREPSQTVVARIVAMVTEASATKATTQLFIEKIEQRYSAGVVVATLALLTVPLMFGADLRSTLLRAMTFMIVASPCAVVLATMPPLLSAIANASRHGVLVKSAVAMERLADTDVVVLDKTGTLTAGEPVISRVTVLIDGADVLGMAAAAEQFSEHPLGRAIVAAARGRVVPEAGDFTALPGRGVRARVAGHVVEVVSPAAYAGENAAVREHCAAIENDGGTAVVVLEDGLPVGVIGLADRLRPDAPAAVMQLAQLTKHPPMLLTGDNRRAAGRLAEEAGIADVHAELLPDGKAAAVQKLQRDNTHVLVVGDGVNDAPAMAAAHTSIAMGRAGADLTVQTADVVTIRDELATVPAVIALARRARRVVIANLVMAGAAITTLVLWDLFGQLPLPLGVAGHEGSTILVALNGLRLLSNRAWISPGATPT</sequence>
<accession>A0R3A7</accession>
<protein>
    <recommendedName>
        <fullName>Probable cobalt/nickel-exporting P-type ATPase</fullName>
        <ecNumber>7.2.2.-</ecNumber>
    </recommendedName>
    <alternativeName>
        <fullName>Cation-transporting P-type ATPase CtpD</fullName>
    </alternativeName>
</protein>
<feature type="chain" id="PRO_0000422735" description="Probable cobalt/nickel-exporting P-type ATPase">
    <location>
        <begin position="1"/>
        <end position="647"/>
    </location>
</feature>
<feature type="transmembrane region" description="Helical" evidence="2">
    <location>
        <begin position="33"/>
        <end position="53"/>
    </location>
</feature>
<feature type="transmembrane region" description="Helical" evidence="2">
    <location>
        <begin position="55"/>
        <end position="75"/>
    </location>
</feature>
<feature type="transmembrane region" description="Helical" evidence="2">
    <location>
        <begin position="94"/>
        <end position="114"/>
    </location>
</feature>
<feature type="transmembrane region" description="Helical" evidence="2">
    <location>
        <begin position="260"/>
        <end position="280"/>
    </location>
</feature>
<feature type="transmembrane region" description="Helical" evidence="2">
    <location>
        <begin position="291"/>
        <end position="311"/>
    </location>
</feature>
<feature type="transmembrane region" description="Helical" evidence="2">
    <location>
        <begin position="587"/>
        <end position="607"/>
    </location>
</feature>
<feature type="active site" description="4-aspartylphosphate intermediate" evidence="1">
    <location>
        <position position="339"/>
    </location>
</feature>
<feature type="binding site" evidence="1">
    <location>
        <position position="532"/>
    </location>
    <ligand>
        <name>Mg(2+)</name>
        <dbReference type="ChEBI" id="CHEBI:18420"/>
    </ligand>
</feature>
<feature type="binding site" evidence="1">
    <location>
        <position position="536"/>
    </location>
    <ligand>
        <name>Mg(2+)</name>
        <dbReference type="ChEBI" id="CHEBI:18420"/>
    </ligand>
</feature>
<dbReference type="EC" id="7.2.2.-"/>
<dbReference type="EMBL" id="CP000480">
    <property type="protein sequence ID" value="ABK73642.1"/>
    <property type="molecule type" value="Genomic_DNA"/>
</dbReference>
<dbReference type="EMBL" id="CP001663">
    <property type="protein sequence ID" value="AFP41699.1"/>
    <property type="molecule type" value="Genomic_DNA"/>
</dbReference>
<dbReference type="RefSeq" id="WP_011730513.1">
    <property type="nucleotide sequence ID" value="NZ_SIJM01000006.1"/>
</dbReference>
<dbReference type="RefSeq" id="YP_889645.1">
    <property type="nucleotide sequence ID" value="NC_008596.1"/>
</dbReference>
<dbReference type="SMR" id="A0R3A7"/>
<dbReference type="STRING" id="246196.MSMEG_5403"/>
<dbReference type="PaxDb" id="246196-MSMEI_5256"/>
<dbReference type="GeneID" id="93460055"/>
<dbReference type="KEGG" id="msb:LJ00_26700"/>
<dbReference type="KEGG" id="msg:MSMEI_5256"/>
<dbReference type="KEGG" id="msm:MSMEG_5403"/>
<dbReference type="PATRIC" id="fig|246196.19.peg.5268"/>
<dbReference type="eggNOG" id="COG2217">
    <property type="taxonomic scope" value="Bacteria"/>
</dbReference>
<dbReference type="OrthoDB" id="7059309at2"/>
<dbReference type="Proteomes" id="UP000000757">
    <property type="component" value="Chromosome"/>
</dbReference>
<dbReference type="Proteomes" id="UP000006158">
    <property type="component" value="Chromosome"/>
</dbReference>
<dbReference type="GO" id="GO:0005886">
    <property type="term" value="C:plasma membrane"/>
    <property type="evidence" value="ECO:0007669"/>
    <property type="project" value="UniProtKB-SubCell"/>
</dbReference>
<dbReference type="GO" id="GO:0015413">
    <property type="term" value="F:ABC-type nickel transporter activity"/>
    <property type="evidence" value="ECO:0007669"/>
    <property type="project" value="RHEA"/>
</dbReference>
<dbReference type="GO" id="GO:0005524">
    <property type="term" value="F:ATP binding"/>
    <property type="evidence" value="ECO:0007669"/>
    <property type="project" value="UniProtKB-KW"/>
</dbReference>
<dbReference type="GO" id="GO:0016887">
    <property type="term" value="F:ATP hydrolysis activity"/>
    <property type="evidence" value="ECO:0007669"/>
    <property type="project" value="InterPro"/>
</dbReference>
<dbReference type="GO" id="GO:0046872">
    <property type="term" value="F:metal ion binding"/>
    <property type="evidence" value="ECO:0007669"/>
    <property type="project" value="UniProtKB-KW"/>
</dbReference>
<dbReference type="GO" id="GO:0032778">
    <property type="term" value="F:P-type cobalt transporter activity"/>
    <property type="evidence" value="ECO:0007669"/>
    <property type="project" value="RHEA"/>
</dbReference>
<dbReference type="FunFam" id="2.70.150.10:FF:000002">
    <property type="entry name" value="Copper-transporting ATPase 1, putative"/>
    <property type="match status" value="1"/>
</dbReference>
<dbReference type="Gene3D" id="3.40.1110.10">
    <property type="entry name" value="Calcium-transporting ATPase, cytoplasmic domain N"/>
    <property type="match status" value="1"/>
</dbReference>
<dbReference type="Gene3D" id="2.70.150.10">
    <property type="entry name" value="Calcium-transporting ATPase, cytoplasmic transduction domain A"/>
    <property type="match status" value="1"/>
</dbReference>
<dbReference type="Gene3D" id="3.40.50.1000">
    <property type="entry name" value="HAD superfamily/HAD-like"/>
    <property type="match status" value="1"/>
</dbReference>
<dbReference type="InterPro" id="IPR023299">
    <property type="entry name" value="ATPase_P-typ_cyto_dom_N"/>
</dbReference>
<dbReference type="InterPro" id="IPR018303">
    <property type="entry name" value="ATPase_P-typ_P_site"/>
</dbReference>
<dbReference type="InterPro" id="IPR023298">
    <property type="entry name" value="ATPase_P-typ_TM_dom_sf"/>
</dbReference>
<dbReference type="InterPro" id="IPR008250">
    <property type="entry name" value="ATPase_P-typ_transduc_dom_A_sf"/>
</dbReference>
<dbReference type="InterPro" id="IPR051949">
    <property type="entry name" value="Cation_Transport_ATPase"/>
</dbReference>
<dbReference type="InterPro" id="IPR036412">
    <property type="entry name" value="HAD-like_sf"/>
</dbReference>
<dbReference type="InterPro" id="IPR023214">
    <property type="entry name" value="HAD_sf"/>
</dbReference>
<dbReference type="InterPro" id="IPR027256">
    <property type="entry name" value="P-typ_ATPase_IB"/>
</dbReference>
<dbReference type="InterPro" id="IPR001757">
    <property type="entry name" value="P_typ_ATPase"/>
</dbReference>
<dbReference type="InterPro" id="IPR044492">
    <property type="entry name" value="P_typ_ATPase_HD_dom"/>
</dbReference>
<dbReference type="NCBIfam" id="TIGR01525">
    <property type="entry name" value="ATPase-IB_hvy"/>
    <property type="match status" value="1"/>
</dbReference>
<dbReference type="NCBIfam" id="TIGR01494">
    <property type="entry name" value="ATPase_P-type"/>
    <property type="match status" value="1"/>
</dbReference>
<dbReference type="PANTHER" id="PTHR43079:SF1">
    <property type="entry name" value="CADMIUM_ZINC-TRANSPORTING ATPASE HMA1, CHLOROPLASTIC-RELATED"/>
    <property type="match status" value="1"/>
</dbReference>
<dbReference type="PANTHER" id="PTHR43079">
    <property type="entry name" value="PROBABLE CADMIUM/ZINC-TRANSPORTING ATPASE HMA1"/>
    <property type="match status" value="1"/>
</dbReference>
<dbReference type="Pfam" id="PF00122">
    <property type="entry name" value="E1-E2_ATPase"/>
    <property type="match status" value="1"/>
</dbReference>
<dbReference type="Pfam" id="PF00702">
    <property type="entry name" value="Hydrolase"/>
    <property type="match status" value="1"/>
</dbReference>
<dbReference type="PRINTS" id="PR00119">
    <property type="entry name" value="CATATPASE"/>
</dbReference>
<dbReference type="PRINTS" id="PR00941">
    <property type="entry name" value="CDATPASE"/>
</dbReference>
<dbReference type="SFLD" id="SFLDG00002">
    <property type="entry name" value="C1.7:_P-type_atpase_like"/>
    <property type="match status" value="1"/>
</dbReference>
<dbReference type="SFLD" id="SFLDF00027">
    <property type="entry name" value="p-type_atpase"/>
    <property type="match status" value="1"/>
</dbReference>
<dbReference type="SUPFAM" id="SSF81653">
    <property type="entry name" value="Calcium ATPase, transduction domain A"/>
    <property type="match status" value="1"/>
</dbReference>
<dbReference type="SUPFAM" id="SSF81665">
    <property type="entry name" value="Calcium ATPase, transmembrane domain M"/>
    <property type="match status" value="1"/>
</dbReference>
<dbReference type="SUPFAM" id="SSF56784">
    <property type="entry name" value="HAD-like"/>
    <property type="match status" value="1"/>
</dbReference>
<dbReference type="PROSITE" id="PS00154">
    <property type="entry name" value="ATPASE_E1_E2"/>
    <property type="match status" value="1"/>
</dbReference>
<keyword id="KW-0067">ATP-binding</keyword>
<keyword id="KW-1003">Cell membrane</keyword>
<keyword id="KW-0170">Cobalt</keyword>
<keyword id="KW-0460">Magnesium</keyword>
<keyword id="KW-0472">Membrane</keyword>
<keyword id="KW-0479">Metal-binding</keyword>
<keyword id="KW-0533">Nickel</keyword>
<keyword id="KW-0547">Nucleotide-binding</keyword>
<keyword id="KW-0597">Phosphoprotein</keyword>
<keyword id="KW-1185">Reference proteome</keyword>
<keyword id="KW-1278">Translocase</keyword>
<keyword id="KW-0812">Transmembrane</keyword>
<keyword id="KW-1133">Transmembrane helix</keyword>